<sequence>MHLAYPAVLAALLFCVGLYGVLARRNAILVLMSVELMLNAVNLNLVAFDVWLRDTLHSGQALTLFTIAIAAAEIGIGLAIVLAVYRNRGTSAIDRLRDTAETDAAETLPDDAGTGPSGTDAAPNGDTTTATGRPGDNAGKNKKAEATR</sequence>
<name>NUOK2_STRGG</name>
<reference key="1">
    <citation type="journal article" date="2008" name="J. Bacteriol.">
        <title>Genome sequence of the streptomycin-producing microorganism Streptomyces griseus IFO 13350.</title>
        <authorList>
            <person name="Ohnishi Y."/>
            <person name="Ishikawa J."/>
            <person name="Hara H."/>
            <person name="Suzuki H."/>
            <person name="Ikenoya M."/>
            <person name="Ikeda H."/>
            <person name="Yamashita A."/>
            <person name="Hattori M."/>
            <person name="Horinouchi S."/>
        </authorList>
    </citation>
    <scope>NUCLEOTIDE SEQUENCE [LARGE SCALE GENOMIC DNA]</scope>
    <source>
        <strain>JCM 4626 / CBS 651.72 / NBRC 13350 / KCC S-0626 / ISP 5235</strain>
    </source>
</reference>
<proteinExistence type="inferred from homology"/>
<comment type="function">
    <text evidence="1">NDH-1 shuttles electrons from NADH, via FMN and iron-sulfur (Fe-S) centers, to quinones in the respiratory chain. The immediate electron acceptor for the enzyme in this species is believed to be a menaquinone. Couples the redox reaction to proton translocation (for every two electrons transferred, four hydrogen ions are translocated across the cytoplasmic membrane), and thus conserves the redox energy in a proton gradient.</text>
</comment>
<comment type="catalytic activity">
    <reaction evidence="1">
        <text>a quinone + NADH + 5 H(+)(in) = a quinol + NAD(+) + 4 H(+)(out)</text>
        <dbReference type="Rhea" id="RHEA:57888"/>
        <dbReference type="ChEBI" id="CHEBI:15378"/>
        <dbReference type="ChEBI" id="CHEBI:24646"/>
        <dbReference type="ChEBI" id="CHEBI:57540"/>
        <dbReference type="ChEBI" id="CHEBI:57945"/>
        <dbReference type="ChEBI" id="CHEBI:132124"/>
    </reaction>
</comment>
<comment type="subunit">
    <text evidence="1">NDH-1 is composed of 14 different subunits. Subunits NuoA, H, J, K, L, M, N constitute the membrane sector of the complex.</text>
</comment>
<comment type="subcellular location">
    <subcellularLocation>
        <location evidence="1">Cell membrane</location>
        <topology evidence="1">Multi-pass membrane protein</topology>
    </subcellularLocation>
</comment>
<comment type="similarity">
    <text evidence="1">Belongs to the complex I subunit 4L family.</text>
</comment>
<accession>B1W4V4</accession>
<evidence type="ECO:0000255" key="1">
    <source>
        <dbReference type="HAMAP-Rule" id="MF_01456"/>
    </source>
</evidence>
<evidence type="ECO:0000256" key="2">
    <source>
        <dbReference type="SAM" id="MobiDB-lite"/>
    </source>
</evidence>
<protein>
    <recommendedName>
        <fullName evidence="1">NADH-quinone oxidoreductase subunit K 2</fullName>
        <ecNumber evidence="1">7.1.1.-</ecNumber>
    </recommendedName>
    <alternativeName>
        <fullName evidence="1">NADH dehydrogenase I subunit K 2</fullName>
    </alternativeName>
    <alternativeName>
        <fullName evidence="1">NDH-1 subunit K 2</fullName>
    </alternativeName>
</protein>
<organism>
    <name type="scientific">Streptomyces griseus subsp. griseus (strain JCM 4626 / CBS 651.72 / NBRC 13350 / KCC S-0626 / ISP 5235)</name>
    <dbReference type="NCBI Taxonomy" id="455632"/>
    <lineage>
        <taxon>Bacteria</taxon>
        <taxon>Bacillati</taxon>
        <taxon>Actinomycetota</taxon>
        <taxon>Actinomycetes</taxon>
        <taxon>Kitasatosporales</taxon>
        <taxon>Streptomycetaceae</taxon>
        <taxon>Streptomyces</taxon>
    </lineage>
</organism>
<gene>
    <name evidence="1" type="primary">nuoK2</name>
    <name type="ordered locus">SGR_2919</name>
</gene>
<dbReference type="EC" id="7.1.1.-" evidence="1"/>
<dbReference type="EMBL" id="AP009493">
    <property type="protein sequence ID" value="BAG19748.1"/>
    <property type="molecule type" value="Genomic_DNA"/>
</dbReference>
<dbReference type="SMR" id="B1W4V4"/>
<dbReference type="KEGG" id="sgr:SGR_2919"/>
<dbReference type="eggNOG" id="COG0713">
    <property type="taxonomic scope" value="Bacteria"/>
</dbReference>
<dbReference type="HOGENOM" id="CLU_144724_1_0_11"/>
<dbReference type="Proteomes" id="UP000001685">
    <property type="component" value="Chromosome"/>
</dbReference>
<dbReference type="GO" id="GO:0030964">
    <property type="term" value="C:NADH dehydrogenase complex"/>
    <property type="evidence" value="ECO:0007669"/>
    <property type="project" value="TreeGrafter"/>
</dbReference>
<dbReference type="GO" id="GO:0005886">
    <property type="term" value="C:plasma membrane"/>
    <property type="evidence" value="ECO:0007669"/>
    <property type="project" value="UniProtKB-SubCell"/>
</dbReference>
<dbReference type="GO" id="GO:0050136">
    <property type="term" value="F:NADH:ubiquinone reductase (non-electrogenic) activity"/>
    <property type="evidence" value="ECO:0007669"/>
    <property type="project" value="UniProtKB-UniRule"/>
</dbReference>
<dbReference type="GO" id="GO:0048038">
    <property type="term" value="F:quinone binding"/>
    <property type="evidence" value="ECO:0007669"/>
    <property type="project" value="UniProtKB-KW"/>
</dbReference>
<dbReference type="GO" id="GO:0042773">
    <property type="term" value="P:ATP synthesis coupled electron transport"/>
    <property type="evidence" value="ECO:0007669"/>
    <property type="project" value="InterPro"/>
</dbReference>
<dbReference type="FunFam" id="1.10.287.3510:FF:000001">
    <property type="entry name" value="NADH-quinone oxidoreductase subunit K"/>
    <property type="match status" value="1"/>
</dbReference>
<dbReference type="Gene3D" id="1.10.287.3510">
    <property type="match status" value="1"/>
</dbReference>
<dbReference type="HAMAP" id="MF_01456">
    <property type="entry name" value="NDH1_NuoK"/>
    <property type="match status" value="1"/>
</dbReference>
<dbReference type="InterPro" id="IPR001133">
    <property type="entry name" value="NADH_UbQ_OxRdtase_chain4L/K"/>
</dbReference>
<dbReference type="InterPro" id="IPR039428">
    <property type="entry name" value="NUOK/Mnh_C1-like"/>
</dbReference>
<dbReference type="NCBIfam" id="NF004320">
    <property type="entry name" value="PRK05715.1-2"/>
    <property type="match status" value="1"/>
</dbReference>
<dbReference type="PANTHER" id="PTHR11434:SF16">
    <property type="entry name" value="NADH-UBIQUINONE OXIDOREDUCTASE CHAIN 4L"/>
    <property type="match status" value="1"/>
</dbReference>
<dbReference type="PANTHER" id="PTHR11434">
    <property type="entry name" value="NADH-UBIQUINONE OXIDOREDUCTASE SUBUNIT ND4L"/>
    <property type="match status" value="1"/>
</dbReference>
<dbReference type="Pfam" id="PF00420">
    <property type="entry name" value="Oxidored_q2"/>
    <property type="match status" value="1"/>
</dbReference>
<feature type="chain" id="PRO_0000390253" description="NADH-quinone oxidoreductase subunit K 2">
    <location>
        <begin position="1"/>
        <end position="148"/>
    </location>
</feature>
<feature type="transmembrane region" description="Helical" evidence="1">
    <location>
        <begin position="3"/>
        <end position="23"/>
    </location>
</feature>
<feature type="transmembrane region" description="Helical" evidence="1">
    <location>
        <begin position="28"/>
        <end position="48"/>
    </location>
</feature>
<feature type="transmembrane region" description="Helical" evidence="1">
    <location>
        <begin position="64"/>
        <end position="84"/>
    </location>
</feature>
<feature type="region of interest" description="Disordered" evidence="2">
    <location>
        <begin position="96"/>
        <end position="148"/>
    </location>
</feature>
<keyword id="KW-1003">Cell membrane</keyword>
<keyword id="KW-0472">Membrane</keyword>
<keyword id="KW-0520">NAD</keyword>
<keyword id="KW-0874">Quinone</keyword>
<keyword id="KW-1278">Translocase</keyword>
<keyword id="KW-0812">Transmembrane</keyword>
<keyword id="KW-1133">Transmembrane helix</keyword>
<keyword id="KW-0813">Transport</keyword>